<sequence>MAKTKYGERHRKGLWSPEEDEKLRSFILSYGHSCWTTVPIKAGLQRNGKSCRLRWINYLRPGLKRDMISAEEEETILTFHSSLGNKWSQIAKFLPGRTDNEIKNYWHSHLKKKWLKSQSLQDAKSISPPSSSSSSLVACGKRNPETLISNHVFSFQRLLENKSSSPSQESNGNNSHQCSSAPEIPRLFFSEWLSSSYPHTDYSSEFTDSKHSQAPNVEETLSAYEEMGDVDQFHYNEMMINNSNWTLNDIVFGSKCKKQEHHIYREASDCNSSAEFFSPSTTT</sequence>
<dbReference type="EMBL" id="AL022197">
    <property type="protein sequence ID" value="CAA18170.1"/>
    <property type="molecule type" value="Genomic_DNA"/>
</dbReference>
<dbReference type="EMBL" id="AL161563">
    <property type="protein sequence ID" value="CAB81366.1"/>
    <property type="molecule type" value="Genomic_DNA"/>
</dbReference>
<dbReference type="EMBL" id="CP002687">
    <property type="protein sequence ID" value="AEE85077.1"/>
    <property type="molecule type" value="Genomic_DNA"/>
</dbReference>
<dbReference type="EMBL" id="AY519609">
    <property type="protein sequence ID" value="AAS10079.1"/>
    <property type="molecule type" value="mRNA"/>
</dbReference>
<dbReference type="EMBL" id="AF062867">
    <property type="protein sequence ID" value="AAC83589.1"/>
    <property type="molecule type" value="mRNA"/>
</dbReference>
<dbReference type="PIR" id="D85295">
    <property type="entry name" value="D85295"/>
</dbReference>
<dbReference type="PIR" id="T05791">
    <property type="entry name" value="T05791"/>
</dbReference>
<dbReference type="PIR" id="T51639">
    <property type="entry name" value="T51639"/>
</dbReference>
<dbReference type="RefSeq" id="NP_194286.1">
    <property type="nucleotide sequence ID" value="NM_118688.3"/>
</dbReference>
<dbReference type="SMR" id="Q9M0K4"/>
<dbReference type="BioGRID" id="13948">
    <property type="interactions" value="11"/>
</dbReference>
<dbReference type="FunCoup" id="Q9M0K4">
    <property type="interactions" value="2"/>
</dbReference>
<dbReference type="IntAct" id="Q9M0K4">
    <property type="interactions" value="2"/>
</dbReference>
<dbReference type="STRING" id="3702.Q9M0K4"/>
<dbReference type="PaxDb" id="3702-AT4G25560.1"/>
<dbReference type="EnsemblPlants" id="AT4G25560.1">
    <property type="protein sequence ID" value="AT4G25560.1"/>
    <property type="gene ID" value="AT4G25560"/>
</dbReference>
<dbReference type="GeneID" id="828661"/>
<dbReference type="Gramene" id="AT4G25560.1">
    <property type="protein sequence ID" value="AT4G25560.1"/>
    <property type="gene ID" value="AT4G25560"/>
</dbReference>
<dbReference type="KEGG" id="ath:AT4G25560"/>
<dbReference type="Araport" id="AT4G25560"/>
<dbReference type="TAIR" id="AT4G25560">
    <property type="gene designation" value="LAF1"/>
</dbReference>
<dbReference type="eggNOG" id="KOG0048">
    <property type="taxonomic scope" value="Eukaryota"/>
</dbReference>
<dbReference type="HOGENOM" id="CLU_028567_6_5_1"/>
<dbReference type="InParanoid" id="Q9M0K4"/>
<dbReference type="OMA" id="TEMMINN"/>
<dbReference type="OrthoDB" id="2143914at2759"/>
<dbReference type="PhylomeDB" id="Q9M0K4"/>
<dbReference type="PRO" id="PR:Q9M0K4"/>
<dbReference type="Proteomes" id="UP000006548">
    <property type="component" value="Chromosome 4"/>
</dbReference>
<dbReference type="ExpressionAtlas" id="Q9M0K4">
    <property type="expression patterns" value="baseline and differential"/>
</dbReference>
<dbReference type="GO" id="GO:0016607">
    <property type="term" value="C:nuclear speck"/>
    <property type="evidence" value="ECO:0007669"/>
    <property type="project" value="UniProtKB-SubCell"/>
</dbReference>
<dbReference type="GO" id="GO:0005634">
    <property type="term" value="C:nucleus"/>
    <property type="evidence" value="ECO:0000314"/>
    <property type="project" value="UniProtKB"/>
</dbReference>
<dbReference type="GO" id="GO:0003677">
    <property type="term" value="F:DNA binding"/>
    <property type="evidence" value="ECO:0007669"/>
    <property type="project" value="UniProtKB-KW"/>
</dbReference>
<dbReference type="GO" id="GO:0003700">
    <property type="term" value="F:DNA-binding transcription factor activity"/>
    <property type="evidence" value="ECO:0000250"/>
    <property type="project" value="TAIR"/>
</dbReference>
<dbReference type="GO" id="GO:0010018">
    <property type="term" value="P:far-red light signaling pathway"/>
    <property type="evidence" value="ECO:0000315"/>
    <property type="project" value="TAIR"/>
</dbReference>
<dbReference type="GO" id="GO:0045893">
    <property type="term" value="P:positive regulation of DNA-templated transcription"/>
    <property type="evidence" value="ECO:0000314"/>
    <property type="project" value="TAIR"/>
</dbReference>
<dbReference type="GO" id="GO:0009585">
    <property type="term" value="P:red, far-red light phototransduction"/>
    <property type="evidence" value="ECO:0007669"/>
    <property type="project" value="UniProtKB-KW"/>
</dbReference>
<dbReference type="GO" id="GO:0009639">
    <property type="term" value="P:response to red or far red light"/>
    <property type="evidence" value="ECO:0000315"/>
    <property type="project" value="TAIR"/>
</dbReference>
<dbReference type="CDD" id="cd00167">
    <property type="entry name" value="SANT"/>
    <property type="match status" value="2"/>
</dbReference>
<dbReference type="FunFam" id="1.10.10.60:FF:000077">
    <property type="entry name" value="MYB transcription factor"/>
    <property type="match status" value="1"/>
</dbReference>
<dbReference type="FunFam" id="1.10.10.60:FF:000371">
    <property type="entry name" value="MYB transcription factor"/>
    <property type="match status" value="1"/>
</dbReference>
<dbReference type="Gene3D" id="1.10.10.60">
    <property type="entry name" value="Homeodomain-like"/>
    <property type="match status" value="2"/>
</dbReference>
<dbReference type="InterPro" id="IPR009057">
    <property type="entry name" value="Homeodomain-like_sf"/>
</dbReference>
<dbReference type="InterPro" id="IPR017930">
    <property type="entry name" value="Myb_dom"/>
</dbReference>
<dbReference type="InterPro" id="IPR051953">
    <property type="entry name" value="Plant_SW-associated_TFs"/>
</dbReference>
<dbReference type="InterPro" id="IPR001005">
    <property type="entry name" value="SANT/Myb"/>
</dbReference>
<dbReference type="PANTHER" id="PTHR47997">
    <property type="entry name" value="MYB DOMAIN PROTEIN 55"/>
    <property type="match status" value="1"/>
</dbReference>
<dbReference type="PANTHER" id="PTHR47997:SF11">
    <property type="entry name" value="TRANSCRIPTION FACTOR LAF1"/>
    <property type="match status" value="1"/>
</dbReference>
<dbReference type="Pfam" id="PF00249">
    <property type="entry name" value="Myb_DNA-binding"/>
    <property type="match status" value="2"/>
</dbReference>
<dbReference type="SMART" id="SM00717">
    <property type="entry name" value="SANT"/>
    <property type="match status" value="2"/>
</dbReference>
<dbReference type="SUPFAM" id="SSF46689">
    <property type="entry name" value="Homeodomain-like"/>
    <property type="match status" value="1"/>
</dbReference>
<dbReference type="PROSITE" id="PS51294">
    <property type="entry name" value="HTH_MYB"/>
    <property type="match status" value="2"/>
</dbReference>
<organism>
    <name type="scientific">Arabidopsis thaliana</name>
    <name type="common">Mouse-ear cress</name>
    <dbReference type="NCBI Taxonomy" id="3702"/>
    <lineage>
        <taxon>Eukaryota</taxon>
        <taxon>Viridiplantae</taxon>
        <taxon>Streptophyta</taxon>
        <taxon>Embryophyta</taxon>
        <taxon>Tracheophyta</taxon>
        <taxon>Spermatophyta</taxon>
        <taxon>Magnoliopsida</taxon>
        <taxon>eudicotyledons</taxon>
        <taxon>Gunneridae</taxon>
        <taxon>Pentapetalae</taxon>
        <taxon>rosids</taxon>
        <taxon>malvids</taxon>
        <taxon>Brassicales</taxon>
        <taxon>Brassicaceae</taxon>
        <taxon>Camelineae</taxon>
        <taxon>Arabidopsis</taxon>
    </lineage>
</organism>
<reference key="1">
    <citation type="journal article" date="2001" name="Genes Dev.">
        <title>LAF1, a MYB transcription activator for phytochrome A signaling.</title>
        <authorList>
            <person name="Ballesteros M.L."/>
            <person name="Bolle C."/>
            <person name="Lois L.M."/>
            <person name="Moore J.M."/>
            <person name="Vielle-Calzada J.-P."/>
            <person name="Grossniklaus U."/>
            <person name="Chua N.-H."/>
        </authorList>
    </citation>
    <scope>NUCLEOTIDE SEQUENCE [GENOMIC DNA]</scope>
    <scope>FUNCTION</scope>
    <scope>SUBCELLULAR LOCATION</scope>
    <scope>TISSUE SPECIFICITY</scope>
    <scope>MUTAGENESIS OF LYS-258</scope>
</reference>
<reference key="2">
    <citation type="journal article" date="1999" name="Nature">
        <title>Sequence and analysis of chromosome 4 of the plant Arabidopsis thaliana.</title>
        <authorList>
            <person name="Mayer K.F.X."/>
            <person name="Schueller C."/>
            <person name="Wambutt R."/>
            <person name="Murphy G."/>
            <person name="Volckaert G."/>
            <person name="Pohl T."/>
            <person name="Duesterhoeft A."/>
            <person name="Stiekema W."/>
            <person name="Entian K.-D."/>
            <person name="Terryn N."/>
            <person name="Harris B."/>
            <person name="Ansorge W."/>
            <person name="Brandt P."/>
            <person name="Grivell L.A."/>
            <person name="Rieger M."/>
            <person name="Weichselgartner M."/>
            <person name="de Simone V."/>
            <person name="Obermaier B."/>
            <person name="Mache R."/>
            <person name="Mueller M."/>
            <person name="Kreis M."/>
            <person name="Delseny M."/>
            <person name="Puigdomenech P."/>
            <person name="Watson M."/>
            <person name="Schmidtheini T."/>
            <person name="Reichert B."/>
            <person name="Portetelle D."/>
            <person name="Perez-Alonso M."/>
            <person name="Boutry M."/>
            <person name="Bancroft I."/>
            <person name="Vos P."/>
            <person name="Hoheisel J."/>
            <person name="Zimmermann W."/>
            <person name="Wedler H."/>
            <person name="Ridley P."/>
            <person name="Langham S.-A."/>
            <person name="McCullagh B."/>
            <person name="Bilham L."/>
            <person name="Robben J."/>
            <person name="van der Schueren J."/>
            <person name="Grymonprez B."/>
            <person name="Chuang Y.-J."/>
            <person name="Vandenbussche F."/>
            <person name="Braeken M."/>
            <person name="Weltjens I."/>
            <person name="Voet M."/>
            <person name="Bastiaens I."/>
            <person name="Aert R."/>
            <person name="Defoor E."/>
            <person name="Weitzenegger T."/>
            <person name="Bothe G."/>
            <person name="Ramsperger U."/>
            <person name="Hilbert H."/>
            <person name="Braun M."/>
            <person name="Holzer E."/>
            <person name="Brandt A."/>
            <person name="Peters S."/>
            <person name="van Staveren M."/>
            <person name="Dirkse W."/>
            <person name="Mooijman P."/>
            <person name="Klein Lankhorst R."/>
            <person name="Rose M."/>
            <person name="Hauf J."/>
            <person name="Koetter P."/>
            <person name="Berneiser S."/>
            <person name="Hempel S."/>
            <person name="Feldpausch M."/>
            <person name="Lamberth S."/>
            <person name="Van den Daele H."/>
            <person name="De Keyser A."/>
            <person name="Buysshaert C."/>
            <person name="Gielen J."/>
            <person name="Villarroel R."/>
            <person name="De Clercq R."/>
            <person name="van Montagu M."/>
            <person name="Rogers J."/>
            <person name="Cronin A."/>
            <person name="Quail M.A."/>
            <person name="Bray-Allen S."/>
            <person name="Clark L."/>
            <person name="Doggett J."/>
            <person name="Hall S."/>
            <person name="Kay M."/>
            <person name="Lennard N."/>
            <person name="McLay K."/>
            <person name="Mayes R."/>
            <person name="Pettett A."/>
            <person name="Rajandream M.A."/>
            <person name="Lyne M."/>
            <person name="Benes V."/>
            <person name="Rechmann S."/>
            <person name="Borkova D."/>
            <person name="Bloecker H."/>
            <person name="Scharfe M."/>
            <person name="Grimm M."/>
            <person name="Loehnert T.-H."/>
            <person name="Dose S."/>
            <person name="de Haan M."/>
            <person name="Maarse A.C."/>
            <person name="Schaefer M."/>
            <person name="Mueller-Auer S."/>
            <person name="Gabel C."/>
            <person name="Fuchs M."/>
            <person name="Fartmann B."/>
            <person name="Granderath K."/>
            <person name="Dauner D."/>
            <person name="Herzl A."/>
            <person name="Neumann S."/>
            <person name="Argiriou A."/>
            <person name="Vitale D."/>
            <person name="Liguori R."/>
            <person name="Piravandi E."/>
            <person name="Massenet O."/>
            <person name="Quigley F."/>
            <person name="Clabauld G."/>
            <person name="Muendlein A."/>
            <person name="Felber R."/>
            <person name="Schnabl S."/>
            <person name="Hiller R."/>
            <person name="Schmidt W."/>
            <person name="Lecharny A."/>
            <person name="Aubourg S."/>
            <person name="Chefdor F."/>
            <person name="Cooke R."/>
            <person name="Berger C."/>
            <person name="Monfort A."/>
            <person name="Casacuberta E."/>
            <person name="Gibbons T."/>
            <person name="Weber N."/>
            <person name="Vandenbol M."/>
            <person name="Bargues M."/>
            <person name="Terol J."/>
            <person name="Torres A."/>
            <person name="Perez-Perez A."/>
            <person name="Purnelle B."/>
            <person name="Bent E."/>
            <person name="Johnson S."/>
            <person name="Tacon D."/>
            <person name="Jesse T."/>
            <person name="Heijnen L."/>
            <person name="Schwarz S."/>
            <person name="Scholler P."/>
            <person name="Heber S."/>
            <person name="Francs P."/>
            <person name="Bielke C."/>
            <person name="Frishman D."/>
            <person name="Haase D."/>
            <person name="Lemcke K."/>
            <person name="Mewes H.-W."/>
            <person name="Stocker S."/>
            <person name="Zaccaria P."/>
            <person name="Bevan M."/>
            <person name="Wilson R.K."/>
            <person name="de la Bastide M."/>
            <person name="Habermann K."/>
            <person name="Parnell L."/>
            <person name="Dedhia N."/>
            <person name="Gnoj L."/>
            <person name="Schutz K."/>
            <person name="Huang E."/>
            <person name="Spiegel L."/>
            <person name="Sekhon M."/>
            <person name="Murray J."/>
            <person name="Sheet P."/>
            <person name="Cordes M."/>
            <person name="Abu-Threideh J."/>
            <person name="Stoneking T."/>
            <person name="Kalicki J."/>
            <person name="Graves T."/>
            <person name="Harmon G."/>
            <person name="Edwards J."/>
            <person name="Latreille P."/>
            <person name="Courtney L."/>
            <person name="Cloud J."/>
            <person name="Abbott A."/>
            <person name="Scott K."/>
            <person name="Johnson D."/>
            <person name="Minx P."/>
            <person name="Bentley D."/>
            <person name="Fulton B."/>
            <person name="Miller N."/>
            <person name="Greco T."/>
            <person name="Kemp K."/>
            <person name="Kramer J."/>
            <person name="Fulton L."/>
            <person name="Mardis E."/>
            <person name="Dante M."/>
            <person name="Pepin K."/>
            <person name="Hillier L.W."/>
            <person name="Nelson J."/>
            <person name="Spieth J."/>
            <person name="Ryan E."/>
            <person name="Andrews S."/>
            <person name="Geisel C."/>
            <person name="Layman D."/>
            <person name="Du H."/>
            <person name="Ali J."/>
            <person name="Berghoff A."/>
            <person name="Jones K."/>
            <person name="Drone K."/>
            <person name="Cotton M."/>
            <person name="Joshu C."/>
            <person name="Antonoiu B."/>
            <person name="Zidanic M."/>
            <person name="Strong C."/>
            <person name="Sun H."/>
            <person name="Lamar B."/>
            <person name="Yordan C."/>
            <person name="Ma P."/>
            <person name="Zhong J."/>
            <person name="Preston R."/>
            <person name="Vil D."/>
            <person name="Shekher M."/>
            <person name="Matero A."/>
            <person name="Shah R."/>
            <person name="Swaby I.K."/>
            <person name="O'Shaughnessy A."/>
            <person name="Rodriguez M."/>
            <person name="Hoffman J."/>
            <person name="Till S."/>
            <person name="Granat S."/>
            <person name="Shohdy N."/>
            <person name="Hasegawa A."/>
            <person name="Hameed A."/>
            <person name="Lodhi M."/>
            <person name="Johnson A."/>
            <person name="Chen E."/>
            <person name="Marra M.A."/>
            <person name="Martienssen R."/>
            <person name="McCombie W.R."/>
        </authorList>
    </citation>
    <scope>NUCLEOTIDE SEQUENCE [LARGE SCALE GENOMIC DNA]</scope>
    <source>
        <strain>cv. Columbia</strain>
    </source>
</reference>
<reference key="3">
    <citation type="journal article" date="2017" name="Plant J.">
        <title>Araport11: a complete reannotation of the Arabidopsis thaliana reference genome.</title>
        <authorList>
            <person name="Cheng C.Y."/>
            <person name="Krishnakumar V."/>
            <person name="Chan A.P."/>
            <person name="Thibaud-Nissen F."/>
            <person name="Schobel S."/>
            <person name="Town C.D."/>
        </authorList>
    </citation>
    <scope>GENOME REANNOTATION</scope>
    <source>
        <strain>cv. Columbia</strain>
    </source>
</reference>
<reference key="4">
    <citation type="journal article" date="2004" name="Plant Physiol.">
        <title>Genome-wide ORFeome cloning and analysis of Arabidopsis transcription factor genes.</title>
        <authorList>
            <person name="Gong W."/>
            <person name="Shen Y.-P."/>
            <person name="Ma L.-G."/>
            <person name="Pan Y."/>
            <person name="Du Y.-L."/>
            <person name="Wang D.-H."/>
            <person name="Yang J.-Y."/>
            <person name="Hu L.-D."/>
            <person name="Liu X.-F."/>
            <person name="Dong C.-X."/>
            <person name="Ma L."/>
            <person name="Chen Y.-H."/>
            <person name="Yang X.-Y."/>
            <person name="Gao Y."/>
            <person name="Zhu D."/>
            <person name="Tan X."/>
            <person name="Mu J.-Y."/>
            <person name="Zhang D.-B."/>
            <person name="Liu Y.-L."/>
            <person name="Dinesh-Kumar S.P."/>
            <person name="Li Y."/>
            <person name="Wang X.-P."/>
            <person name="Gu H.-Y."/>
            <person name="Qu L.-J."/>
            <person name="Bai S.-N."/>
            <person name="Lu Y.-T."/>
            <person name="Li J.-Y."/>
            <person name="Zhao J.-D."/>
            <person name="Zuo J."/>
            <person name="Huang H."/>
            <person name="Deng X.-W."/>
            <person name="Zhu Y.-X."/>
        </authorList>
    </citation>
    <scope>NUCLEOTIDE SEQUENCE [LARGE SCALE MRNA]</scope>
    <source>
        <strain>cv. Columbia</strain>
    </source>
</reference>
<reference key="5">
    <citation type="journal article" date="1998" name="Plant J.">
        <title>Towards functional characterisation of the members of the R2R3-MYB gene family from Arabidopsis thaliana.</title>
        <authorList>
            <person name="Kranz H.D."/>
            <person name="Denekamp M."/>
            <person name="Greco R."/>
            <person name="Jin H.-L."/>
            <person name="Leyva A."/>
            <person name="Meissner R.C."/>
            <person name="Petroni K."/>
            <person name="Urzainqui A."/>
            <person name="Bevan M."/>
            <person name="Martin C."/>
            <person name="Smeekens S."/>
            <person name="Tonelli C."/>
            <person name="Paz-Ares J."/>
            <person name="Weisshaar B."/>
        </authorList>
    </citation>
    <scope>NUCLEOTIDE SEQUENCE [MRNA] OF 52-283</scope>
    <scope>INDUCTION</scope>
    <scope>NOMENCLATURE</scope>
    <source>
        <strain>cv. Columbia</strain>
    </source>
</reference>
<reference key="6">
    <citation type="journal article" date="2003" name="Nature">
        <title>LAF1 ubiquitination by COP1 controls photomorphogenesis and is stimulated by SPA1.</title>
        <authorList>
            <person name="Seo H.S."/>
            <person name="Yang J.-Y."/>
            <person name="Ishikawa M."/>
            <person name="Bolle C."/>
            <person name="Ballesteros M.L."/>
            <person name="Chua N.-H."/>
        </authorList>
    </citation>
    <scope>UBIQUITINATION BY COP1</scope>
</reference>
<reference key="7">
    <citation type="journal article" date="2006" name="Plant Mol. Biol.">
        <title>The MYB transcription factor superfamily of Arabidopsis: expression analysis and phylogenetic comparison with the rice MYB family.</title>
        <authorList>
            <person name="Chen Y."/>
            <person name="Yang X."/>
            <person name="He K."/>
            <person name="Liu M."/>
            <person name="Li J."/>
            <person name="Gao Z."/>
            <person name="Lin Z."/>
            <person name="Zhang Y."/>
            <person name="Wang X."/>
            <person name="Qiu X."/>
            <person name="Shen Y."/>
            <person name="Zhang L."/>
            <person name="Deng X."/>
            <person name="Luo J."/>
            <person name="Deng X.-W."/>
            <person name="Chen Z."/>
            <person name="Gu H."/>
            <person name="Qu L.-J."/>
        </authorList>
    </citation>
    <scope>GENE FAMILY</scope>
</reference>
<reference key="8">
    <citation type="journal article" date="2009" name="Plant Cell">
        <title>FAR-RED ELONGATED HYPOCOTYL1 and FHY1-LIKE associate with the Arabidopsis transcription factors LAF1 and HFR1 to transmit phytochrome A signals for inhibition of hypocotyl elongation.</title>
        <authorList>
            <person name="Yang S.W."/>
            <person name="Jang I.-C."/>
            <person name="Henriques R."/>
            <person name="Chua N.-H."/>
        </authorList>
    </citation>
    <scope>FUNCTION</scope>
    <scope>DISRUPTION PHENOTYPE</scope>
    <scope>SUBCELLULAR LOCATION</scope>
    <scope>INTERACTION WITH FHY1 AND FHL</scope>
    <source>
        <strain>cv. Columbia</strain>
    </source>
</reference>
<evidence type="ECO:0000255" key="1">
    <source>
        <dbReference type="PROSITE-ProRule" id="PRU00625"/>
    </source>
</evidence>
<evidence type="ECO:0000269" key="2">
    <source>
    </source>
</evidence>
<evidence type="ECO:0000269" key="3">
    <source>
    </source>
</evidence>
<evidence type="ECO:0000269" key="4">
    <source>
    </source>
</evidence>
<evidence type="ECO:0000269" key="5">
    <source>
    </source>
</evidence>
<evidence type="ECO:0000303" key="6">
    <source>
    </source>
</evidence>
<evidence type="ECO:0000303" key="7">
    <source>
    </source>
</evidence>
<evidence type="ECO:0000305" key="8"/>
<evidence type="ECO:0000312" key="9">
    <source>
        <dbReference type="Araport" id="AT4G25560"/>
    </source>
</evidence>
<evidence type="ECO:0000312" key="10">
    <source>
        <dbReference type="EMBL" id="CAA18170.1"/>
    </source>
</evidence>
<feature type="chain" id="PRO_0000197074" description="Transcription factor LAF1">
    <location>
        <begin position="1"/>
        <end position="283"/>
    </location>
</feature>
<feature type="domain" description="HTH myb-type 1" evidence="1">
    <location>
        <begin position="7"/>
        <end position="59"/>
    </location>
</feature>
<feature type="domain" description="HTH myb-type 2" evidence="1">
    <location>
        <begin position="60"/>
        <end position="114"/>
    </location>
</feature>
<feature type="DNA-binding region" description="H-T-H motif" evidence="1">
    <location>
        <begin position="35"/>
        <end position="59"/>
    </location>
</feature>
<feature type="DNA-binding region" description="H-T-H motif" evidence="1">
    <location>
        <begin position="87"/>
        <end position="110"/>
    </location>
</feature>
<feature type="mutagenesis site" description="Abolishes the speckles localization in the nucleus possibly due to the absence of sumoylation at this residue." evidence="2">
    <original>K</original>
    <variation>R</variation>
    <location>
        <position position="258"/>
    </location>
</feature>
<feature type="sequence conflict" description="In Ref. 5; AAC83589." evidence="8" ref="5">
    <original>S</original>
    <variation>P</variation>
    <location>
        <position position="82"/>
    </location>
</feature>
<feature type="sequence conflict" description="In Ref. 5; AAC83589." evidence="8" ref="5">
    <original>K</original>
    <variation>E</variation>
    <location>
        <position position="141"/>
    </location>
</feature>
<feature type="sequence conflict" description="In Ref. 5; AAC83589." evidence="8" ref="5">
    <original>F</original>
    <variation>L</variation>
    <location>
        <position position="155"/>
    </location>
</feature>
<feature type="sequence conflict" description="In Ref. 5; AAC83589." evidence="8" ref="5">
    <original>S</original>
    <variation>P</variation>
    <location>
        <position position="280"/>
    </location>
</feature>
<gene>
    <name evidence="6" type="primary">LAF1</name>
    <name evidence="7" type="synonym">MYB18</name>
    <name evidence="9" type="ordered locus">At4g25560</name>
    <name evidence="10" type="ORF">M7J2.70</name>
</gene>
<comment type="function">
    <text evidence="2 4">Transcription factor that promotes photomorphogenesis in the light by participating in the transmission of phytochrome A (phyA) signals to downstream responses (PubMed:11581165, PubMed:19482971). Probably acts by activating expression of light-induced genes. In darkness, its degradation prevents the activation of light-induced genes (PubMed:11581165).</text>
</comment>
<comment type="subunit">
    <text evidence="4">Binds to FHY1 and FHL (PubMed:19482971). Interacts with COP1.</text>
</comment>
<comment type="interaction">
    <interactant intactId="EBI-1543309">
        <id>Q9M0K4</id>
    </interactant>
    <interactant intactId="EBI-301649">
        <id>P43254</id>
        <label>COP1</label>
    </interactant>
    <organismsDiffer>false</organismsDiffer>
    <experiments>3</experiments>
</comment>
<comment type="interaction">
    <interactant intactId="EBI-1543309">
        <id>Q9M0K4</id>
    </interactant>
    <interactant intactId="EBI-626001">
        <id>Q9FE22</id>
        <label>HFR1</label>
    </interactant>
    <organismsDiffer>false</organismsDiffer>
    <experiments>6</experiments>
</comment>
<comment type="subcellular location">
    <subcellularLocation>
        <location evidence="1 2 4">Nucleus speckle</location>
    </subcellularLocation>
</comment>
<comment type="tissue specificity">
    <text evidence="2">Expressed at very low level. Expressed in cauline leaves.</text>
</comment>
<comment type="induction">
    <text evidence="5">By hormones or elicitors treatment. By exposure to abiotic stress.</text>
</comment>
<comment type="PTM">
    <text evidence="3">Ubiquitinated by COP1. Ubiquitination takes place in darkness and leads to its subsequent degradation, thereby preventing to activate photomorphogenesis signals. Ubiquitination is stimulated by SPA1.</text>
</comment>
<comment type="disruption phenotype">
    <text evidence="4">Partially blind to far-red (FR). Impaired inhibition of hypocotyl elongation and cotyledons expansion under continuous FR light conditions.</text>
</comment>
<accession>Q9M0K4</accession>
<accession>Q9SUI1</accession>
<accession>Q9ZTF0</accession>
<protein>
    <recommendedName>
        <fullName evidence="6">Transcription factor LAF1</fullName>
    </recommendedName>
    <alternativeName>
        <fullName evidence="7">Myb-related protein 18</fullName>
        <shortName evidence="7">AtMYB18</shortName>
    </alternativeName>
    <alternativeName>
        <fullName evidence="6">Protein LONG AFTER FAR-RED LIGHT 1</fullName>
    </alternativeName>
</protein>
<keyword id="KW-0010">Activator</keyword>
<keyword id="KW-0238">DNA-binding</keyword>
<keyword id="KW-0539">Nucleus</keyword>
<keyword id="KW-0607">Phytochrome signaling pathway</keyword>
<keyword id="KW-1185">Reference proteome</keyword>
<keyword id="KW-0677">Repeat</keyword>
<keyword id="KW-0804">Transcription</keyword>
<keyword id="KW-0805">Transcription regulation</keyword>
<keyword id="KW-0832">Ubl conjugation</keyword>
<proteinExistence type="evidence at protein level"/>
<name>LAF1_ARATH</name>